<protein>
    <recommendedName>
        <fullName evidence="5">Small ribosomal subunit protein bS1m</fullName>
    </recommendedName>
    <alternativeName>
        <fullName>28S ribosomal protein S28, mitochondrial</fullName>
        <shortName>MRP-S28</shortName>
        <shortName>S28mt</shortName>
    </alternativeName>
</protein>
<feature type="transit peptide" description="Mitochondrion" evidence="1">
    <location>
        <begin position="1"/>
        <end position="70"/>
    </location>
</feature>
<feature type="chain" id="PRO_0000087715" description="Small ribosomal subunit protein bS1m">
    <location>
        <begin position="71"/>
        <end position="186"/>
    </location>
</feature>
<feature type="region of interest" description="Disordered" evidence="4">
    <location>
        <begin position="29"/>
        <end position="50"/>
    </location>
</feature>
<feature type="compositionally biased region" description="Polar residues" evidence="4">
    <location>
        <begin position="29"/>
        <end position="42"/>
    </location>
</feature>
<feature type="modified residue" description="Phosphoserine" evidence="6 7">
    <location>
        <position position="72"/>
    </location>
</feature>
<feature type="modified residue" description="N6-acetyllysine" evidence="3">
    <location>
        <position position="132"/>
    </location>
</feature>
<feature type="sequence conflict" description="In Ref. 1; AAH28530." evidence="5" ref="1">
    <original>S</original>
    <variation>L</variation>
    <location>
        <position position="60"/>
    </location>
</feature>
<accession>Q9CY16</accession>
<accession>Q8R2K6</accession>
<comment type="subunit">
    <text evidence="2">Component of the mitochondrial ribosome small subunit (28S) which comprises a 12S rRNA and about 30 distinct proteins.</text>
</comment>
<comment type="subcellular location">
    <subcellularLocation>
        <location evidence="2">Mitochondrion</location>
    </subcellularLocation>
</comment>
<comment type="similarity">
    <text evidence="5">Belongs to the bacterial ribosomal protein bS1 family.</text>
</comment>
<sequence length="186" mass="20520">MAALCRSHAGTAGSRFLRALVFSKPLRNASTESGSESATHDSSAPRARSGGFASALERHSDLQRKAELRLESPKPVESFASMLRHSPLTQLGPAKDKLVIGRIFHIVEDDLYIDFGGKFHCVCKRPDVDGEKYQRGTRVRLRLLDLELTSRFLGGTTDTTILEADAVLLGLQEIRDSKSREEQPSK</sequence>
<organism>
    <name type="scientific">Mus musculus</name>
    <name type="common">Mouse</name>
    <dbReference type="NCBI Taxonomy" id="10090"/>
    <lineage>
        <taxon>Eukaryota</taxon>
        <taxon>Metazoa</taxon>
        <taxon>Chordata</taxon>
        <taxon>Craniata</taxon>
        <taxon>Vertebrata</taxon>
        <taxon>Euteleostomi</taxon>
        <taxon>Mammalia</taxon>
        <taxon>Eutheria</taxon>
        <taxon>Euarchontoglires</taxon>
        <taxon>Glires</taxon>
        <taxon>Rodentia</taxon>
        <taxon>Myomorpha</taxon>
        <taxon>Muroidea</taxon>
        <taxon>Muridae</taxon>
        <taxon>Murinae</taxon>
        <taxon>Mus</taxon>
        <taxon>Mus</taxon>
    </lineage>
</organism>
<keyword id="KW-0002">3D-structure</keyword>
<keyword id="KW-0007">Acetylation</keyword>
<keyword id="KW-0496">Mitochondrion</keyword>
<keyword id="KW-0597">Phosphoprotein</keyword>
<keyword id="KW-1185">Reference proteome</keyword>
<keyword id="KW-0687">Ribonucleoprotein</keyword>
<keyword id="KW-0689">Ribosomal protein</keyword>
<keyword id="KW-0809">Transit peptide</keyword>
<dbReference type="EMBL" id="AK011036">
    <property type="protein sequence ID" value="BAB27349.1"/>
    <property type="molecule type" value="mRNA"/>
</dbReference>
<dbReference type="EMBL" id="BC028530">
    <property type="protein sequence ID" value="AAH28530.1"/>
    <property type="molecule type" value="mRNA"/>
</dbReference>
<dbReference type="CCDS" id="CCDS17233.1"/>
<dbReference type="RefSeq" id="NP_079710.3">
    <property type="nucleotide sequence ID" value="NM_025434.3"/>
</dbReference>
<dbReference type="PDB" id="7PNT">
    <property type="method" value="EM"/>
    <property type="resolution" value="3.19 A"/>
    <property type="chains" value="W=1-186"/>
</dbReference>
<dbReference type="PDB" id="7PNU">
    <property type="method" value="EM"/>
    <property type="resolution" value="3.06 A"/>
    <property type="chains" value="W=1-186"/>
</dbReference>
<dbReference type="PDB" id="7PNV">
    <property type="method" value="EM"/>
    <property type="resolution" value="3.06 A"/>
    <property type="chains" value="W=1-186"/>
</dbReference>
<dbReference type="PDB" id="7PNW">
    <property type="method" value="EM"/>
    <property type="resolution" value="3.09 A"/>
    <property type="chains" value="W=1-186"/>
</dbReference>
<dbReference type="PDBsum" id="7PNT"/>
<dbReference type="PDBsum" id="7PNU"/>
<dbReference type="PDBsum" id="7PNV"/>
<dbReference type="PDBsum" id="7PNW"/>
<dbReference type="EMDB" id="EMD-13551"/>
<dbReference type="EMDB" id="EMD-13552"/>
<dbReference type="EMDB" id="EMD-13553"/>
<dbReference type="EMDB" id="EMD-13554"/>
<dbReference type="SMR" id="Q9CY16"/>
<dbReference type="BioGRID" id="211312">
    <property type="interactions" value="1"/>
</dbReference>
<dbReference type="ComplexPortal" id="CPX-5301">
    <property type="entry name" value="28S mitochondrial small ribosomal subunit"/>
</dbReference>
<dbReference type="FunCoup" id="Q9CY16">
    <property type="interactions" value="880"/>
</dbReference>
<dbReference type="STRING" id="10090.ENSMUSP00000038305"/>
<dbReference type="GlyGen" id="Q9CY16">
    <property type="glycosylation" value="1 site, 1 O-linked glycan (1 site)"/>
</dbReference>
<dbReference type="iPTMnet" id="Q9CY16"/>
<dbReference type="PhosphoSitePlus" id="Q9CY16"/>
<dbReference type="jPOST" id="Q9CY16"/>
<dbReference type="PaxDb" id="10090-ENSMUSP00000038305"/>
<dbReference type="PeptideAtlas" id="Q9CY16"/>
<dbReference type="ProteomicsDB" id="260861"/>
<dbReference type="Pumba" id="Q9CY16"/>
<dbReference type="Antibodypedia" id="12414">
    <property type="antibodies" value="96 antibodies from 22 providers"/>
</dbReference>
<dbReference type="DNASU" id="66230"/>
<dbReference type="Ensembl" id="ENSMUST00000042148.6">
    <property type="protein sequence ID" value="ENSMUSP00000038305.6"/>
    <property type="gene ID" value="ENSMUSG00000040269.6"/>
</dbReference>
<dbReference type="GeneID" id="66230"/>
<dbReference type="KEGG" id="mmu:66230"/>
<dbReference type="UCSC" id="uc008ooq.2">
    <property type="organism name" value="mouse"/>
</dbReference>
<dbReference type="AGR" id="MGI:1913480"/>
<dbReference type="CTD" id="28957"/>
<dbReference type="MGI" id="MGI:1913480">
    <property type="gene designation" value="Mrps28"/>
</dbReference>
<dbReference type="VEuPathDB" id="HostDB:ENSMUSG00000040269"/>
<dbReference type="eggNOG" id="KOG4078">
    <property type="taxonomic scope" value="Eukaryota"/>
</dbReference>
<dbReference type="GeneTree" id="ENSGT00390000001057"/>
<dbReference type="HOGENOM" id="CLU_109102_2_0_1"/>
<dbReference type="InParanoid" id="Q9CY16"/>
<dbReference type="OMA" id="CVCSRPT"/>
<dbReference type="OrthoDB" id="6020229at2759"/>
<dbReference type="PhylomeDB" id="Q9CY16"/>
<dbReference type="TreeFam" id="TF315097"/>
<dbReference type="Reactome" id="R-MMU-5389840">
    <property type="pathway name" value="Mitochondrial translation elongation"/>
</dbReference>
<dbReference type="Reactome" id="R-MMU-5419276">
    <property type="pathway name" value="Mitochondrial translation termination"/>
</dbReference>
<dbReference type="BioGRID-ORCS" id="66230">
    <property type="hits" value="14 hits in 78 CRISPR screens"/>
</dbReference>
<dbReference type="ChiTaRS" id="Mrps28">
    <property type="organism name" value="mouse"/>
</dbReference>
<dbReference type="PRO" id="PR:Q9CY16"/>
<dbReference type="Proteomes" id="UP000000589">
    <property type="component" value="Chromosome 3"/>
</dbReference>
<dbReference type="RNAct" id="Q9CY16">
    <property type="molecule type" value="protein"/>
</dbReference>
<dbReference type="Bgee" id="ENSMUSG00000040269">
    <property type="expression patterns" value="Expressed in floor plate of midbrain and 250 other cell types or tissues"/>
</dbReference>
<dbReference type="GO" id="GO:0005743">
    <property type="term" value="C:mitochondrial inner membrane"/>
    <property type="evidence" value="ECO:0000303"/>
    <property type="project" value="ComplexPortal"/>
</dbReference>
<dbReference type="GO" id="GO:0005763">
    <property type="term" value="C:mitochondrial small ribosomal subunit"/>
    <property type="evidence" value="ECO:0000250"/>
    <property type="project" value="UniProtKB"/>
</dbReference>
<dbReference type="GO" id="GO:0005739">
    <property type="term" value="C:mitochondrion"/>
    <property type="evidence" value="ECO:0007005"/>
    <property type="project" value="MGI"/>
</dbReference>
<dbReference type="GO" id="GO:0032543">
    <property type="term" value="P:mitochondrial translation"/>
    <property type="evidence" value="ECO:0000250"/>
    <property type="project" value="UniProtKB"/>
</dbReference>
<dbReference type="InterPro" id="IPR019375">
    <property type="entry name" value="Ribosomal_bS1m"/>
</dbReference>
<dbReference type="PANTHER" id="PTHR13447">
    <property type="entry name" value="MITOCHONDRIAL 28S RIBOSOMAL PROTEIN S28"/>
    <property type="match status" value="1"/>
</dbReference>
<dbReference type="PANTHER" id="PTHR13447:SF2">
    <property type="entry name" value="SMALL RIBOSOMAL SUBUNIT PROTEIN BS1M"/>
    <property type="match status" value="1"/>
</dbReference>
<dbReference type="Pfam" id="PF10246">
    <property type="entry name" value="MRP-S35"/>
    <property type="match status" value="1"/>
</dbReference>
<name>RT28_MOUSE</name>
<proteinExistence type="evidence at protein level"/>
<reference key="1">
    <citation type="journal article" date="2005" name="Science">
        <title>The transcriptional landscape of the mammalian genome.</title>
        <authorList>
            <person name="Carninci P."/>
            <person name="Kasukawa T."/>
            <person name="Katayama S."/>
            <person name="Gough J."/>
            <person name="Frith M.C."/>
            <person name="Maeda N."/>
            <person name="Oyama R."/>
            <person name="Ravasi T."/>
            <person name="Lenhard B."/>
            <person name="Wells C."/>
            <person name="Kodzius R."/>
            <person name="Shimokawa K."/>
            <person name="Bajic V.B."/>
            <person name="Brenner S.E."/>
            <person name="Batalov S."/>
            <person name="Forrest A.R."/>
            <person name="Zavolan M."/>
            <person name="Davis M.J."/>
            <person name="Wilming L.G."/>
            <person name="Aidinis V."/>
            <person name="Allen J.E."/>
            <person name="Ambesi-Impiombato A."/>
            <person name="Apweiler R."/>
            <person name="Aturaliya R.N."/>
            <person name="Bailey T.L."/>
            <person name="Bansal M."/>
            <person name="Baxter L."/>
            <person name="Beisel K.W."/>
            <person name="Bersano T."/>
            <person name="Bono H."/>
            <person name="Chalk A.M."/>
            <person name="Chiu K.P."/>
            <person name="Choudhary V."/>
            <person name="Christoffels A."/>
            <person name="Clutterbuck D.R."/>
            <person name="Crowe M.L."/>
            <person name="Dalla E."/>
            <person name="Dalrymple B.P."/>
            <person name="de Bono B."/>
            <person name="Della Gatta G."/>
            <person name="di Bernardo D."/>
            <person name="Down T."/>
            <person name="Engstrom P."/>
            <person name="Fagiolini M."/>
            <person name="Faulkner G."/>
            <person name="Fletcher C.F."/>
            <person name="Fukushima T."/>
            <person name="Furuno M."/>
            <person name="Futaki S."/>
            <person name="Gariboldi M."/>
            <person name="Georgii-Hemming P."/>
            <person name="Gingeras T.R."/>
            <person name="Gojobori T."/>
            <person name="Green R.E."/>
            <person name="Gustincich S."/>
            <person name="Harbers M."/>
            <person name="Hayashi Y."/>
            <person name="Hensch T.K."/>
            <person name="Hirokawa N."/>
            <person name="Hill D."/>
            <person name="Huminiecki L."/>
            <person name="Iacono M."/>
            <person name="Ikeo K."/>
            <person name="Iwama A."/>
            <person name="Ishikawa T."/>
            <person name="Jakt M."/>
            <person name="Kanapin A."/>
            <person name="Katoh M."/>
            <person name="Kawasawa Y."/>
            <person name="Kelso J."/>
            <person name="Kitamura H."/>
            <person name="Kitano H."/>
            <person name="Kollias G."/>
            <person name="Krishnan S.P."/>
            <person name="Kruger A."/>
            <person name="Kummerfeld S.K."/>
            <person name="Kurochkin I.V."/>
            <person name="Lareau L.F."/>
            <person name="Lazarevic D."/>
            <person name="Lipovich L."/>
            <person name="Liu J."/>
            <person name="Liuni S."/>
            <person name="McWilliam S."/>
            <person name="Madan Babu M."/>
            <person name="Madera M."/>
            <person name="Marchionni L."/>
            <person name="Matsuda H."/>
            <person name="Matsuzawa S."/>
            <person name="Miki H."/>
            <person name="Mignone F."/>
            <person name="Miyake S."/>
            <person name="Morris K."/>
            <person name="Mottagui-Tabar S."/>
            <person name="Mulder N."/>
            <person name="Nakano N."/>
            <person name="Nakauchi H."/>
            <person name="Ng P."/>
            <person name="Nilsson R."/>
            <person name="Nishiguchi S."/>
            <person name="Nishikawa S."/>
            <person name="Nori F."/>
            <person name="Ohara O."/>
            <person name="Okazaki Y."/>
            <person name="Orlando V."/>
            <person name="Pang K.C."/>
            <person name="Pavan W.J."/>
            <person name="Pavesi G."/>
            <person name="Pesole G."/>
            <person name="Petrovsky N."/>
            <person name="Piazza S."/>
            <person name="Reed J."/>
            <person name="Reid J.F."/>
            <person name="Ring B.Z."/>
            <person name="Ringwald M."/>
            <person name="Rost B."/>
            <person name="Ruan Y."/>
            <person name="Salzberg S.L."/>
            <person name="Sandelin A."/>
            <person name="Schneider C."/>
            <person name="Schoenbach C."/>
            <person name="Sekiguchi K."/>
            <person name="Semple C.A."/>
            <person name="Seno S."/>
            <person name="Sessa L."/>
            <person name="Sheng Y."/>
            <person name="Shibata Y."/>
            <person name="Shimada H."/>
            <person name="Shimada K."/>
            <person name="Silva D."/>
            <person name="Sinclair B."/>
            <person name="Sperling S."/>
            <person name="Stupka E."/>
            <person name="Sugiura K."/>
            <person name="Sultana R."/>
            <person name="Takenaka Y."/>
            <person name="Taki K."/>
            <person name="Tammoja K."/>
            <person name="Tan S.L."/>
            <person name="Tang S."/>
            <person name="Taylor M.S."/>
            <person name="Tegner J."/>
            <person name="Teichmann S.A."/>
            <person name="Ueda H.R."/>
            <person name="van Nimwegen E."/>
            <person name="Verardo R."/>
            <person name="Wei C.L."/>
            <person name="Yagi K."/>
            <person name="Yamanishi H."/>
            <person name="Zabarovsky E."/>
            <person name="Zhu S."/>
            <person name="Zimmer A."/>
            <person name="Hide W."/>
            <person name="Bult C."/>
            <person name="Grimmond S.M."/>
            <person name="Teasdale R.D."/>
            <person name="Liu E.T."/>
            <person name="Brusic V."/>
            <person name="Quackenbush J."/>
            <person name="Wahlestedt C."/>
            <person name="Mattick J.S."/>
            <person name="Hume D.A."/>
            <person name="Kai C."/>
            <person name="Sasaki D."/>
            <person name="Tomaru Y."/>
            <person name="Fukuda S."/>
            <person name="Kanamori-Katayama M."/>
            <person name="Suzuki M."/>
            <person name="Aoki J."/>
            <person name="Arakawa T."/>
            <person name="Iida J."/>
            <person name="Imamura K."/>
            <person name="Itoh M."/>
            <person name="Kato T."/>
            <person name="Kawaji H."/>
            <person name="Kawagashira N."/>
            <person name="Kawashima T."/>
            <person name="Kojima M."/>
            <person name="Kondo S."/>
            <person name="Konno H."/>
            <person name="Nakano K."/>
            <person name="Ninomiya N."/>
            <person name="Nishio T."/>
            <person name="Okada M."/>
            <person name="Plessy C."/>
            <person name="Shibata K."/>
            <person name="Shiraki T."/>
            <person name="Suzuki S."/>
            <person name="Tagami M."/>
            <person name="Waki K."/>
            <person name="Watahiki A."/>
            <person name="Okamura-Oho Y."/>
            <person name="Suzuki H."/>
            <person name="Kawai J."/>
            <person name="Hayashizaki Y."/>
        </authorList>
    </citation>
    <scope>NUCLEOTIDE SEQUENCE [LARGE SCALE MRNA]</scope>
    <source>
        <strain>C57BL/6J</strain>
        <tissue>Embryonic liver</tissue>
    </source>
</reference>
<reference key="2">
    <citation type="journal article" date="2004" name="Genome Res.">
        <title>The status, quality, and expansion of the NIH full-length cDNA project: the Mammalian Gene Collection (MGC).</title>
        <authorList>
            <consortium name="The MGC Project Team"/>
        </authorList>
    </citation>
    <scope>NUCLEOTIDE SEQUENCE [LARGE SCALE MRNA]</scope>
    <source>
        <tissue>Mammary gland</tissue>
    </source>
</reference>
<reference key="3">
    <citation type="journal article" date="2007" name="Proc. Natl. Acad. Sci. U.S.A.">
        <title>Large-scale phosphorylation analysis of mouse liver.</title>
        <authorList>
            <person name="Villen J."/>
            <person name="Beausoleil S.A."/>
            <person name="Gerber S.A."/>
            <person name="Gygi S.P."/>
        </authorList>
    </citation>
    <scope>PHOSPHORYLATION [LARGE SCALE ANALYSIS] AT SER-72</scope>
    <scope>IDENTIFICATION BY MASS SPECTROMETRY [LARGE SCALE ANALYSIS]</scope>
    <source>
        <tissue>Liver</tissue>
    </source>
</reference>
<reference key="4">
    <citation type="journal article" date="2010" name="Cell">
        <title>A tissue-specific atlas of mouse protein phosphorylation and expression.</title>
        <authorList>
            <person name="Huttlin E.L."/>
            <person name="Jedrychowski M.P."/>
            <person name="Elias J.E."/>
            <person name="Goswami T."/>
            <person name="Rad R."/>
            <person name="Beausoleil S.A."/>
            <person name="Villen J."/>
            <person name="Haas W."/>
            <person name="Sowa M.E."/>
            <person name="Gygi S.P."/>
        </authorList>
    </citation>
    <scope>PHOSPHORYLATION [LARGE SCALE ANALYSIS] AT SER-72</scope>
    <scope>IDENTIFICATION BY MASS SPECTROMETRY [LARGE SCALE ANALYSIS]</scope>
    <source>
        <tissue>Brown adipose tissue</tissue>
        <tissue>Heart</tissue>
        <tissue>Kidney</tissue>
        <tissue>Liver</tissue>
        <tissue>Pancreas</tissue>
    </source>
</reference>
<gene>
    <name type="primary">Mrps28</name>
</gene>
<evidence type="ECO:0000250" key="1"/>
<evidence type="ECO:0000250" key="2">
    <source>
        <dbReference type="UniProtKB" id="P82928"/>
    </source>
</evidence>
<evidence type="ECO:0000250" key="3">
    <source>
        <dbReference type="UniProtKB" id="Q9Y2Q9"/>
    </source>
</evidence>
<evidence type="ECO:0000256" key="4">
    <source>
        <dbReference type="SAM" id="MobiDB-lite"/>
    </source>
</evidence>
<evidence type="ECO:0000305" key="5"/>
<evidence type="ECO:0007744" key="6">
    <source>
    </source>
</evidence>
<evidence type="ECO:0007744" key="7">
    <source>
    </source>
</evidence>